<proteinExistence type="evidence at protein level"/>
<keyword id="KW-0903">Direct protein sequencing</keyword>
<keyword id="KW-1015">Disulfide bond</keyword>
<keyword id="KW-0872">Ion channel impairing toxin</keyword>
<keyword id="KW-0528">Neurotoxin</keyword>
<keyword id="KW-0964">Secreted</keyword>
<keyword id="KW-0800">Toxin</keyword>
<keyword id="KW-0738">Voltage-gated sodium channel impairing toxin</keyword>
<name>SCX3_CENBA</name>
<feature type="chain" id="PRO_0000450849" description="Beta-toxin Cb3">
    <location>
        <begin position="1"/>
        <end position="66"/>
    </location>
</feature>
<feature type="domain" description="LCN-type CS-alpha/beta" evidence="1">
    <location>
        <begin position="1"/>
        <end position="66"/>
    </location>
</feature>
<feature type="disulfide bond" evidence="1">
    <location>
        <begin position="12"/>
        <end position="65"/>
    </location>
</feature>
<feature type="disulfide bond" evidence="1">
    <location>
        <begin position="16"/>
        <end position="41"/>
    </location>
</feature>
<feature type="disulfide bond" evidence="1">
    <location>
        <begin position="25"/>
        <end position="46"/>
    </location>
</feature>
<feature type="disulfide bond" evidence="1">
    <location>
        <begin position="29"/>
        <end position="48"/>
    </location>
</feature>
<reference evidence="4" key="1">
    <citation type="journal article" date="2020" name="Toxicon">
        <title>Biochemical, electrophysiological and immunological characterization of the venom from Centruroides baergi, a new scorpion species of medical importance in Mexico.</title>
        <authorList>
            <person name="Gomez-Ramirez I.V."/>
            <person name="Riano-Umbarila L."/>
            <person name="Olamendi-Portugal T."/>
            <person name="Restano-Cassulini R."/>
            <person name="Possani L.D."/>
            <person name="Becerril B."/>
        </authorList>
    </citation>
    <scope>PROTEIN SEQUENCE</scope>
    <scope>FUNCTION</scope>
    <scope>SUBCELLULAR LOCATION</scope>
    <scope>MASS SPECTROMETRY</scope>
    <scope>TOXIC DOSE</scope>
    <source>
        <tissue evidence="3">Venom</tissue>
    </source>
</reference>
<comment type="function">
    <text evidence="2">Beta toxins bind voltage-independently at site-4 of sodium channels (Nav) and reduces peak current and shifts the voltage of activation toward more negative potentials thereby affecting sodium channel activation and promoting spontaneous and repetitive firing (PubMed:32479835). Has an inhibitory effect on voltage-gated sodium channels hNav1.1/SCN1A, hNav1.2/SCN2A, hNav1.4/SCN4A and hNav1.6/SCN8A (PubMed:32479835). Reduces the peak current of hNav1.5/SCN5A but does not shift its voltage of activation (PubMed:32479835). Also affects the inactivation processes of hNav1.1/SCN1A, hNav1.4/SCN4A, hNav1.5/SCN5A and hNav1.6/SCN8A (PubMed:32479835). This toxin is active against mammals and lethal to mice (PubMed:32479835).</text>
</comment>
<comment type="subcellular location">
    <subcellularLocation>
        <location evidence="2">Secreted</location>
    </subcellularLocation>
</comment>
<comment type="tissue specificity">
    <text evidence="5">Expressed by the venom gland.</text>
</comment>
<comment type="domain">
    <text evidence="4">Has the structural arrangement of an alpha-helix connected to antiparallel beta-sheets by disulfide bonds (CS-alpha/beta).</text>
</comment>
<comment type="mass spectrometry"/>
<comment type="toxic dose">
    <text evidence="2">LD(50) is 0.5 ug/mouse by intraperitoneal injection into mice.</text>
</comment>
<comment type="similarity">
    <text evidence="4">Belongs to the long (4 C-C) scorpion toxin superfamily. Sodium channel inhibitor family. Beta subfamily.</text>
</comment>
<organism evidence="3">
    <name type="scientific">Centruroides baergi</name>
    <name type="common">Scorpion</name>
    <name type="synonym">Centruroides nigrovariatus baergi</name>
    <dbReference type="NCBI Taxonomy" id="329350"/>
    <lineage>
        <taxon>Eukaryota</taxon>
        <taxon>Metazoa</taxon>
        <taxon>Ecdysozoa</taxon>
        <taxon>Arthropoda</taxon>
        <taxon>Chelicerata</taxon>
        <taxon>Arachnida</taxon>
        <taxon>Scorpiones</taxon>
        <taxon>Buthida</taxon>
        <taxon>Buthoidea</taxon>
        <taxon>Buthidae</taxon>
        <taxon>Centruroides</taxon>
    </lineage>
</organism>
<dbReference type="SMR" id="C0HLR5"/>
<dbReference type="ABCD" id="C0HLR5">
    <property type="antibodies" value="2 sequenced antibodies"/>
</dbReference>
<dbReference type="GO" id="GO:0005615">
    <property type="term" value="C:extracellular space"/>
    <property type="evidence" value="ECO:0000314"/>
    <property type="project" value="UniProtKB"/>
</dbReference>
<dbReference type="GO" id="GO:0019871">
    <property type="term" value="F:sodium channel inhibitor activity"/>
    <property type="evidence" value="ECO:0000314"/>
    <property type="project" value="UniProtKB"/>
</dbReference>
<dbReference type="GO" id="GO:0090729">
    <property type="term" value="F:toxin activity"/>
    <property type="evidence" value="ECO:0000314"/>
    <property type="project" value="UniProtKB"/>
</dbReference>
<dbReference type="GO" id="GO:0006952">
    <property type="term" value="P:defense response"/>
    <property type="evidence" value="ECO:0000314"/>
    <property type="project" value="UniProtKB"/>
</dbReference>
<dbReference type="GO" id="GO:0044493">
    <property type="term" value="P:envenomation resulting in negative regulation of voltage-gated sodium channel activity in another organism"/>
    <property type="evidence" value="ECO:0000314"/>
    <property type="project" value="UniProtKB"/>
</dbReference>
<dbReference type="CDD" id="cd23106">
    <property type="entry name" value="neurotoxins_LC_scorpion"/>
    <property type="match status" value="1"/>
</dbReference>
<dbReference type="FunFam" id="3.30.30.10:FF:000002">
    <property type="entry name" value="Alpha-like toxin BmK-M1"/>
    <property type="match status" value="1"/>
</dbReference>
<dbReference type="Gene3D" id="3.30.30.10">
    <property type="entry name" value="Knottin, scorpion toxin-like"/>
    <property type="match status" value="1"/>
</dbReference>
<dbReference type="InterPro" id="IPR044062">
    <property type="entry name" value="LCN-type_CS_alpha_beta_dom"/>
</dbReference>
<dbReference type="InterPro" id="IPR003614">
    <property type="entry name" value="Scorpion_toxin-like"/>
</dbReference>
<dbReference type="InterPro" id="IPR036574">
    <property type="entry name" value="Scorpion_toxin-like_sf"/>
</dbReference>
<dbReference type="InterPro" id="IPR018218">
    <property type="entry name" value="Scorpion_toxinL"/>
</dbReference>
<dbReference type="PRINTS" id="PR00285">
    <property type="entry name" value="SCORPNTOXIN"/>
</dbReference>
<dbReference type="SMART" id="SM00505">
    <property type="entry name" value="Knot1"/>
    <property type="match status" value="1"/>
</dbReference>
<dbReference type="SUPFAM" id="SSF57095">
    <property type="entry name" value="Scorpion toxin-like"/>
    <property type="match status" value="1"/>
</dbReference>
<dbReference type="PROSITE" id="PS51863">
    <property type="entry name" value="LCN_CSAB"/>
    <property type="match status" value="1"/>
</dbReference>
<sequence>KEGYIVNYYDGCKYPCVKLGDNDYCLRECRLRYYKSAGGYCYAFACWCTHLYEQAVVWPLPNKTCL</sequence>
<protein>
    <recommendedName>
        <fullName evidence="3">Beta-toxin Cb3</fullName>
    </recommendedName>
</protein>
<evidence type="ECO:0000255" key="1">
    <source>
        <dbReference type="PROSITE-ProRule" id="PRU01210"/>
    </source>
</evidence>
<evidence type="ECO:0000269" key="2">
    <source>
    </source>
</evidence>
<evidence type="ECO:0000303" key="3">
    <source>
    </source>
</evidence>
<evidence type="ECO:0000305" key="4"/>
<evidence type="ECO:0000305" key="5">
    <source>
    </source>
</evidence>
<accession>C0HLR5</accession>